<proteinExistence type="evidence at transcript level"/>
<gene>
    <name evidence="2" type="primary">pNG7</name>
</gene>
<protein>
    <recommendedName>
        <fullName>Uncharacterized protein pNG7</fullName>
    </recommendedName>
</protein>
<comment type="induction">
    <text evidence="1">Expressed in the early phase of the viral replicative cycle.</text>
</comment>
<organismHost>
    <name type="scientific">Ornithodoros</name>
    <name type="common">relapsing fever ticks</name>
    <dbReference type="NCBI Taxonomy" id="6937"/>
</organismHost>
<organismHost>
    <name type="scientific">Sus scrofa</name>
    <name type="common">Pig</name>
    <dbReference type="NCBI Taxonomy" id="9823"/>
</organismHost>
<organism>
    <name type="scientific">African swine fever virus (strain Badajoz 1971 Vero-adapted)</name>
    <name type="common">Ba71V</name>
    <name type="synonym">ASFV</name>
    <dbReference type="NCBI Taxonomy" id="10498"/>
    <lineage>
        <taxon>Viruses</taxon>
        <taxon>Varidnaviria</taxon>
        <taxon>Bamfordvirae</taxon>
        <taxon>Nucleocytoviricota</taxon>
        <taxon>Pokkesviricetes</taxon>
        <taxon>Asfuvirales</taxon>
        <taxon>Asfarviridae</taxon>
        <taxon>Asfivirus</taxon>
        <taxon>African swine fever virus</taxon>
    </lineage>
</organism>
<name>PNG7_ASFB7</name>
<evidence type="ECO:0000269" key="1">
    <source>
    </source>
</evidence>
<evidence type="ECO:0000303" key="2">
    <source>
    </source>
</evidence>
<sequence>MMCMIIRRNRFTGVHDQNLIFNVKSTDVNCLV</sequence>
<accession>P0DTI3</accession>
<reference key="1">
    <citation type="journal article" date="1995" name="Virology">
        <title>Analysis of the complete nucleotide sequence of African swine fever virus.</title>
        <authorList>
            <person name="Yanez R.J."/>
            <person name="Rodriguez J.M."/>
            <person name="Nogal M.L."/>
            <person name="Yuste L."/>
            <person name="Enriquez C."/>
            <person name="Rodriguez J.F."/>
            <person name="Vinuela E."/>
        </authorList>
    </citation>
    <scope>NUCLEOTIDE SEQUENCE [LARGE SCALE GENOMIC DNA]</scope>
</reference>
<reference key="2">
    <citation type="journal article" date="2020" name="J. Virol.">
        <title>The African Swine Fever Virus Transcriptome.</title>
        <authorList>
            <person name="Cackett G."/>
            <person name="Matelska D."/>
            <person name="Sykora M."/>
            <person name="Portugal R."/>
            <person name="Malecki M."/>
            <person name="Baehler J."/>
            <person name="Dixon L."/>
            <person name="Werner F."/>
        </authorList>
    </citation>
    <scope>IDENTIFICATION</scope>
    <scope>INDUCTION</scope>
</reference>
<feature type="chain" id="PRO_0000454440" description="Uncharacterized protein pNG7">
    <location>
        <begin position="1"/>
        <end position="32"/>
    </location>
</feature>
<dbReference type="EMBL" id="U18466">
    <property type="status" value="NOT_ANNOTATED_CDS"/>
    <property type="molecule type" value="Genomic_DNA"/>
</dbReference>
<dbReference type="Proteomes" id="UP000000624">
    <property type="component" value="Segment"/>
</dbReference>
<keyword id="KW-0244">Early protein</keyword>
<keyword id="KW-1185">Reference proteome</keyword>